<protein>
    <recommendedName>
        <fullName evidence="1">Leucine--tRNA ligase</fullName>
        <ecNumber evidence="1">6.1.1.4</ecNumber>
    </recommendedName>
    <alternativeName>
        <fullName evidence="1">Leucyl-tRNA synthetase</fullName>
        <shortName evidence="1">LeuRS</shortName>
    </alternativeName>
</protein>
<proteinExistence type="inferred from homology"/>
<name>SYL_FRATF</name>
<organism>
    <name type="scientific">Francisella tularensis subsp. holarctica (strain FTNF002-00 / FTA)</name>
    <dbReference type="NCBI Taxonomy" id="458234"/>
    <lineage>
        <taxon>Bacteria</taxon>
        <taxon>Pseudomonadati</taxon>
        <taxon>Pseudomonadota</taxon>
        <taxon>Gammaproteobacteria</taxon>
        <taxon>Thiotrichales</taxon>
        <taxon>Francisellaceae</taxon>
        <taxon>Francisella</taxon>
    </lineage>
</organism>
<keyword id="KW-0030">Aminoacyl-tRNA synthetase</keyword>
<keyword id="KW-0067">ATP-binding</keyword>
<keyword id="KW-0963">Cytoplasm</keyword>
<keyword id="KW-0436">Ligase</keyword>
<keyword id="KW-0547">Nucleotide-binding</keyword>
<keyword id="KW-0648">Protein biosynthesis</keyword>
<dbReference type="EC" id="6.1.1.4" evidence="1"/>
<dbReference type="EMBL" id="CP000803">
    <property type="protein sequence ID" value="ABU61756.1"/>
    <property type="molecule type" value="Genomic_DNA"/>
</dbReference>
<dbReference type="RefSeq" id="WP_003016304.1">
    <property type="nucleotide sequence ID" value="NC_009749.1"/>
</dbReference>
<dbReference type="SMR" id="A7NCQ3"/>
<dbReference type="KEGG" id="fta:FTA_1281"/>
<dbReference type="HOGENOM" id="CLU_004427_0_0_6"/>
<dbReference type="GO" id="GO:0005829">
    <property type="term" value="C:cytosol"/>
    <property type="evidence" value="ECO:0007669"/>
    <property type="project" value="TreeGrafter"/>
</dbReference>
<dbReference type="GO" id="GO:0002161">
    <property type="term" value="F:aminoacyl-tRNA deacylase activity"/>
    <property type="evidence" value="ECO:0007669"/>
    <property type="project" value="InterPro"/>
</dbReference>
<dbReference type="GO" id="GO:0005524">
    <property type="term" value="F:ATP binding"/>
    <property type="evidence" value="ECO:0007669"/>
    <property type="project" value="UniProtKB-UniRule"/>
</dbReference>
<dbReference type="GO" id="GO:0004823">
    <property type="term" value="F:leucine-tRNA ligase activity"/>
    <property type="evidence" value="ECO:0007669"/>
    <property type="project" value="UniProtKB-UniRule"/>
</dbReference>
<dbReference type="GO" id="GO:0006429">
    <property type="term" value="P:leucyl-tRNA aminoacylation"/>
    <property type="evidence" value="ECO:0007669"/>
    <property type="project" value="UniProtKB-UniRule"/>
</dbReference>
<dbReference type="CDD" id="cd07958">
    <property type="entry name" value="Anticodon_Ia_Leu_BEm"/>
    <property type="match status" value="1"/>
</dbReference>
<dbReference type="CDD" id="cd00812">
    <property type="entry name" value="LeuRS_core"/>
    <property type="match status" value="1"/>
</dbReference>
<dbReference type="FunFam" id="1.10.730.10:FF:000002">
    <property type="entry name" value="Leucine--tRNA ligase"/>
    <property type="match status" value="1"/>
</dbReference>
<dbReference type="FunFam" id="3.10.20.590:FF:000001">
    <property type="entry name" value="Leucine--tRNA ligase"/>
    <property type="match status" value="1"/>
</dbReference>
<dbReference type="FunFam" id="3.40.50.620:FF:000056">
    <property type="entry name" value="Leucine--tRNA ligase"/>
    <property type="match status" value="1"/>
</dbReference>
<dbReference type="FunFam" id="3.40.50.620:FF:000395">
    <property type="entry name" value="Leucine--tRNA ligase"/>
    <property type="match status" value="1"/>
</dbReference>
<dbReference type="FunFam" id="3.90.740.10:FF:000012">
    <property type="entry name" value="Leucine--tRNA ligase"/>
    <property type="match status" value="1"/>
</dbReference>
<dbReference type="Gene3D" id="3.10.20.590">
    <property type="match status" value="1"/>
</dbReference>
<dbReference type="Gene3D" id="3.40.50.620">
    <property type="entry name" value="HUPs"/>
    <property type="match status" value="2"/>
</dbReference>
<dbReference type="Gene3D" id="1.10.730.10">
    <property type="entry name" value="Isoleucyl-tRNA Synthetase, Domain 1"/>
    <property type="match status" value="1"/>
</dbReference>
<dbReference type="HAMAP" id="MF_00049_B">
    <property type="entry name" value="Leu_tRNA_synth_B"/>
    <property type="match status" value="1"/>
</dbReference>
<dbReference type="InterPro" id="IPR001412">
    <property type="entry name" value="aa-tRNA-synth_I_CS"/>
</dbReference>
<dbReference type="InterPro" id="IPR002300">
    <property type="entry name" value="aa-tRNA-synth_Ia"/>
</dbReference>
<dbReference type="InterPro" id="IPR002302">
    <property type="entry name" value="Leu-tRNA-ligase"/>
</dbReference>
<dbReference type="InterPro" id="IPR025709">
    <property type="entry name" value="Leu_tRNA-synth_edit"/>
</dbReference>
<dbReference type="InterPro" id="IPR013155">
    <property type="entry name" value="M/V/L/I-tRNA-synth_anticd-bd"/>
</dbReference>
<dbReference type="InterPro" id="IPR015413">
    <property type="entry name" value="Methionyl/Leucyl_tRNA_Synth"/>
</dbReference>
<dbReference type="InterPro" id="IPR014729">
    <property type="entry name" value="Rossmann-like_a/b/a_fold"/>
</dbReference>
<dbReference type="InterPro" id="IPR009080">
    <property type="entry name" value="tRNAsynth_Ia_anticodon-bd"/>
</dbReference>
<dbReference type="InterPro" id="IPR009008">
    <property type="entry name" value="Val/Leu/Ile-tRNA-synth_edit"/>
</dbReference>
<dbReference type="NCBIfam" id="TIGR00396">
    <property type="entry name" value="leuS_bact"/>
    <property type="match status" value="1"/>
</dbReference>
<dbReference type="PANTHER" id="PTHR43740:SF2">
    <property type="entry name" value="LEUCINE--TRNA LIGASE, MITOCHONDRIAL"/>
    <property type="match status" value="1"/>
</dbReference>
<dbReference type="PANTHER" id="PTHR43740">
    <property type="entry name" value="LEUCYL-TRNA SYNTHETASE"/>
    <property type="match status" value="1"/>
</dbReference>
<dbReference type="Pfam" id="PF08264">
    <property type="entry name" value="Anticodon_1"/>
    <property type="match status" value="1"/>
</dbReference>
<dbReference type="Pfam" id="PF00133">
    <property type="entry name" value="tRNA-synt_1"/>
    <property type="match status" value="1"/>
</dbReference>
<dbReference type="Pfam" id="PF13603">
    <property type="entry name" value="tRNA-synt_1_2"/>
    <property type="match status" value="1"/>
</dbReference>
<dbReference type="Pfam" id="PF09334">
    <property type="entry name" value="tRNA-synt_1g"/>
    <property type="match status" value="1"/>
</dbReference>
<dbReference type="PRINTS" id="PR00985">
    <property type="entry name" value="TRNASYNTHLEU"/>
</dbReference>
<dbReference type="SUPFAM" id="SSF47323">
    <property type="entry name" value="Anticodon-binding domain of a subclass of class I aminoacyl-tRNA synthetases"/>
    <property type="match status" value="1"/>
</dbReference>
<dbReference type="SUPFAM" id="SSF52374">
    <property type="entry name" value="Nucleotidylyl transferase"/>
    <property type="match status" value="1"/>
</dbReference>
<dbReference type="SUPFAM" id="SSF50677">
    <property type="entry name" value="ValRS/IleRS/LeuRS editing domain"/>
    <property type="match status" value="1"/>
</dbReference>
<dbReference type="PROSITE" id="PS00178">
    <property type="entry name" value="AA_TRNA_LIGASE_I"/>
    <property type="match status" value="1"/>
</dbReference>
<accession>A7NCQ3</accession>
<comment type="catalytic activity">
    <reaction evidence="1">
        <text>tRNA(Leu) + L-leucine + ATP = L-leucyl-tRNA(Leu) + AMP + diphosphate</text>
        <dbReference type="Rhea" id="RHEA:11688"/>
        <dbReference type="Rhea" id="RHEA-COMP:9613"/>
        <dbReference type="Rhea" id="RHEA-COMP:9622"/>
        <dbReference type="ChEBI" id="CHEBI:30616"/>
        <dbReference type="ChEBI" id="CHEBI:33019"/>
        <dbReference type="ChEBI" id="CHEBI:57427"/>
        <dbReference type="ChEBI" id="CHEBI:78442"/>
        <dbReference type="ChEBI" id="CHEBI:78494"/>
        <dbReference type="ChEBI" id="CHEBI:456215"/>
        <dbReference type="EC" id="6.1.1.4"/>
    </reaction>
</comment>
<comment type="subcellular location">
    <subcellularLocation>
        <location evidence="1">Cytoplasm</location>
    </subcellularLocation>
</comment>
<comment type="similarity">
    <text evidence="1">Belongs to the class-I aminoacyl-tRNA synthetase family.</text>
</comment>
<reference key="1">
    <citation type="journal article" date="2009" name="PLoS ONE">
        <title>Complete genome sequence of Francisella tularensis subspecies holarctica FTNF002-00.</title>
        <authorList>
            <person name="Barabote R.D."/>
            <person name="Xie G."/>
            <person name="Brettin T.S."/>
            <person name="Hinrichs S.H."/>
            <person name="Fey P.D."/>
            <person name="Jay J.J."/>
            <person name="Engle J.L."/>
            <person name="Godbole S.D."/>
            <person name="Noronha J.M."/>
            <person name="Scheuermann R.H."/>
            <person name="Zhou L.W."/>
            <person name="Lion C."/>
            <person name="Dempsey M.P."/>
        </authorList>
    </citation>
    <scope>NUCLEOTIDE SEQUENCE [LARGE SCALE GENOMIC DNA]</scope>
    <source>
        <strain>FTNF002-00 / FTA</strain>
    </source>
</reference>
<feature type="chain" id="PRO_1000009341" description="Leucine--tRNA ligase">
    <location>
        <begin position="1"/>
        <end position="813"/>
    </location>
</feature>
<feature type="short sequence motif" description="'HIGH' region">
    <location>
        <begin position="41"/>
        <end position="51"/>
    </location>
</feature>
<feature type="short sequence motif" description="'KMSKS' region">
    <location>
        <begin position="575"/>
        <end position="579"/>
    </location>
</feature>
<feature type="binding site" evidence="1">
    <location>
        <position position="578"/>
    </location>
    <ligand>
        <name>ATP</name>
        <dbReference type="ChEBI" id="CHEBI:30616"/>
    </ligand>
</feature>
<evidence type="ECO:0000255" key="1">
    <source>
        <dbReference type="HAMAP-Rule" id="MF_00049"/>
    </source>
</evidence>
<gene>
    <name evidence="1" type="primary">leuS</name>
    <name type="ordered locus">FTA_1281</name>
</gene>
<sequence length="813" mass="93406">MNEYNFSDIEKSTQEYWRKNDTFKTIEDNTKEKFYCLSMLPYPSGTLHMGHVRNYTIGDVIARYQKMQGKNVLHPMGWDAFGLPAENAAIKHKKSPYEWTKSNIAYMRSQFDSLGFSFDWSREIATCDEDYYKWEQWFFIQLYKKGLAYRKNSVVNWDPVDQTVLANEQVVDGRGWRSGALVEKKEIPQWFLKITDYADELLQDINKLDNWPEAVKTMQINWIGKSKGLTVKFKVKDSNQEIEVFTTRPDTLMGVNYLGIAPEHPLALKEAKSNSQLAAFIEECKKTSTMEADLATQEKKGFKTSIKVIHPISAETIDVWVANFVLMGYGSGAVMSVPAHDQRDWEFAQKYNIPLKQVIESNDNKLKIDLEKQAFTEKGILINSGEFDGLNFKNAYQAIKKYLTKQNKGYETTNFRIHDWGISRQRYWGCPIPMIHCDDCGAVPEKEENLPVRLPTDVALTEAGSPLKDIPEFINVACPECGKPAKRETDTFDTFFESSWYYARYTCPTSNQMLDQEANYWLPVDKYIGGIEHAIMHLLYARFFHKLMRDQGLVKSDEPFKNLLTQGMVLKDGAKMSKSKGNIVDPQELIDKYGADTVRLFSMFAASPEQSLEWSETGVEGANKFLRKVFNYAELNKVIFAKNITLESQKLTKEDKKARFEIHSNLKQAIFDFDKSQFNTVVSACMKILNTLNNYDNLSESVKVEGFSILLRILAPFTPHLCHYLWQQLNLGEDILHTSFPTVDNNALEKDEFLLVVQINGKLKAKLELDASLSSNQVEEVVLADEHVKSFIDNKQVVKVIYVPQKLINIVIK</sequence>